<accession>A7MXE4</accession>
<gene>
    <name evidence="2" type="primary">tuf1</name>
    <name type="ordered locus">VIBHAR_00054</name>
</gene>
<gene>
    <name evidence="2" type="primary">tuf2</name>
    <name type="ordered locus">VIBHAR_00233</name>
</gene>
<evidence type="ECO:0000250" key="1"/>
<evidence type="ECO:0000255" key="2">
    <source>
        <dbReference type="HAMAP-Rule" id="MF_00118"/>
    </source>
</evidence>
<organism>
    <name type="scientific">Vibrio campbellii (strain ATCC BAA-1116)</name>
    <dbReference type="NCBI Taxonomy" id="2902295"/>
    <lineage>
        <taxon>Bacteria</taxon>
        <taxon>Pseudomonadati</taxon>
        <taxon>Pseudomonadota</taxon>
        <taxon>Gammaproteobacteria</taxon>
        <taxon>Vibrionales</taxon>
        <taxon>Vibrionaceae</taxon>
        <taxon>Vibrio</taxon>
    </lineage>
</organism>
<sequence>MSKEKFERVKPHVNVGTIGHVDHGKTTLTAAICTTLAKVYGGAARDFASIDNAPEERERGITIATSHVEYDTPTRHYAHVDCPGHADYVKNMITGAAQMDGGILVVAATDGPMPQTREHILLGRQVGIPYIIVFMNKCDMVDDEELLELVEMEVRELLSEYDFPGDDLPVIQGSALGALNGEEQWEAKIVELAEALDSYIPEPERAVDMPFLMPIEDVFSIQGRGTVVTGRIERGILNVGDEVAIVGIKDTTTTTCTGVEMFRKLLDEGRAGENVGALLRGTKRDEVERGQVLAKPGSITPHTKFESEVYVLSKDEGGRHTPFFKGYRPQFYFRTTDVTGDISLPEGVEMVMPGDNIQMQVELIAPIAMDEGLRFAIREGGRTVGAGVVAKIFD</sequence>
<proteinExistence type="inferred from homology"/>
<name>EFTU_VIBC1</name>
<dbReference type="EC" id="3.6.5.3" evidence="2"/>
<dbReference type="EMBL" id="CP000789">
    <property type="protein sequence ID" value="ABU69114.1"/>
    <property type="molecule type" value="Genomic_DNA"/>
</dbReference>
<dbReference type="EMBL" id="CP000789">
    <property type="protein sequence ID" value="ABU69273.1"/>
    <property type="molecule type" value="Genomic_DNA"/>
</dbReference>
<dbReference type="SMR" id="A7MXE4"/>
<dbReference type="KEGG" id="vha:VIBHAR_00054"/>
<dbReference type="KEGG" id="vha:VIBHAR_00233"/>
<dbReference type="PATRIC" id="fig|338187.25.peg.2469"/>
<dbReference type="Proteomes" id="UP000008152">
    <property type="component" value="Chromosome I"/>
</dbReference>
<dbReference type="GO" id="GO:0005829">
    <property type="term" value="C:cytosol"/>
    <property type="evidence" value="ECO:0007669"/>
    <property type="project" value="TreeGrafter"/>
</dbReference>
<dbReference type="GO" id="GO:0005525">
    <property type="term" value="F:GTP binding"/>
    <property type="evidence" value="ECO:0007669"/>
    <property type="project" value="UniProtKB-UniRule"/>
</dbReference>
<dbReference type="GO" id="GO:0003924">
    <property type="term" value="F:GTPase activity"/>
    <property type="evidence" value="ECO:0007669"/>
    <property type="project" value="InterPro"/>
</dbReference>
<dbReference type="GO" id="GO:0097216">
    <property type="term" value="F:guanosine tetraphosphate binding"/>
    <property type="evidence" value="ECO:0007669"/>
    <property type="project" value="UniProtKB-ARBA"/>
</dbReference>
<dbReference type="GO" id="GO:0003746">
    <property type="term" value="F:translation elongation factor activity"/>
    <property type="evidence" value="ECO:0007669"/>
    <property type="project" value="UniProtKB-UniRule"/>
</dbReference>
<dbReference type="CDD" id="cd01884">
    <property type="entry name" value="EF_Tu"/>
    <property type="match status" value="1"/>
</dbReference>
<dbReference type="CDD" id="cd03697">
    <property type="entry name" value="EFTU_II"/>
    <property type="match status" value="1"/>
</dbReference>
<dbReference type="CDD" id="cd03707">
    <property type="entry name" value="EFTU_III"/>
    <property type="match status" value="1"/>
</dbReference>
<dbReference type="FunFam" id="2.40.30.10:FF:000001">
    <property type="entry name" value="Elongation factor Tu"/>
    <property type="match status" value="1"/>
</dbReference>
<dbReference type="FunFam" id="3.40.50.300:FF:000003">
    <property type="entry name" value="Elongation factor Tu"/>
    <property type="match status" value="1"/>
</dbReference>
<dbReference type="Gene3D" id="3.40.50.300">
    <property type="entry name" value="P-loop containing nucleotide triphosphate hydrolases"/>
    <property type="match status" value="1"/>
</dbReference>
<dbReference type="Gene3D" id="2.40.30.10">
    <property type="entry name" value="Translation factors"/>
    <property type="match status" value="2"/>
</dbReference>
<dbReference type="HAMAP" id="MF_00118_B">
    <property type="entry name" value="EF_Tu_B"/>
    <property type="match status" value="1"/>
</dbReference>
<dbReference type="InterPro" id="IPR041709">
    <property type="entry name" value="EF-Tu_GTP-bd"/>
</dbReference>
<dbReference type="InterPro" id="IPR050055">
    <property type="entry name" value="EF-Tu_GTPase"/>
</dbReference>
<dbReference type="InterPro" id="IPR004161">
    <property type="entry name" value="EFTu-like_2"/>
</dbReference>
<dbReference type="InterPro" id="IPR033720">
    <property type="entry name" value="EFTU_2"/>
</dbReference>
<dbReference type="InterPro" id="IPR031157">
    <property type="entry name" value="G_TR_CS"/>
</dbReference>
<dbReference type="InterPro" id="IPR027417">
    <property type="entry name" value="P-loop_NTPase"/>
</dbReference>
<dbReference type="InterPro" id="IPR005225">
    <property type="entry name" value="Small_GTP-bd"/>
</dbReference>
<dbReference type="InterPro" id="IPR000795">
    <property type="entry name" value="T_Tr_GTP-bd_dom"/>
</dbReference>
<dbReference type="InterPro" id="IPR009000">
    <property type="entry name" value="Transl_B-barrel_sf"/>
</dbReference>
<dbReference type="InterPro" id="IPR009001">
    <property type="entry name" value="Transl_elong_EF1A/Init_IF2_C"/>
</dbReference>
<dbReference type="InterPro" id="IPR004541">
    <property type="entry name" value="Transl_elong_EFTu/EF1A_bac/org"/>
</dbReference>
<dbReference type="InterPro" id="IPR004160">
    <property type="entry name" value="Transl_elong_EFTu/EF1A_C"/>
</dbReference>
<dbReference type="NCBIfam" id="TIGR00485">
    <property type="entry name" value="EF-Tu"/>
    <property type="match status" value="1"/>
</dbReference>
<dbReference type="NCBIfam" id="NF000766">
    <property type="entry name" value="PRK00049.1"/>
    <property type="match status" value="1"/>
</dbReference>
<dbReference type="NCBIfam" id="NF009372">
    <property type="entry name" value="PRK12735.1"/>
    <property type="match status" value="1"/>
</dbReference>
<dbReference type="NCBIfam" id="NF009373">
    <property type="entry name" value="PRK12736.1"/>
    <property type="match status" value="1"/>
</dbReference>
<dbReference type="NCBIfam" id="TIGR00231">
    <property type="entry name" value="small_GTP"/>
    <property type="match status" value="1"/>
</dbReference>
<dbReference type="PANTHER" id="PTHR43721:SF22">
    <property type="entry name" value="ELONGATION FACTOR TU, MITOCHONDRIAL"/>
    <property type="match status" value="1"/>
</dbReference>
<dbReference type="PANTHER" id="PTHR43721">
    <property type="entry name" value="ELONGATION FACTOR TU-RELATED"/>
    <property type="match status" value="1"/>
</dbReference>
<dbReference type="Pfam" id="PF00009">
    <property type="entry name" value="GTP_EFTU"/>
    <property type="match status" value="1"/>
</dbReference>
<dbReference type="Pfam" id="PF03144">
    <property type="entry name" value="GTP_EFTU_D2"/>
    <property type="match status" value="1"/>
</dbReference>
<dbReference type="Pfam" id="PF03143">
    <property type="entry name" value="GTP_EFTU_D3"/>
    <property type="match status" value="1"/>
</dbReference>
<dbReference type="PRINTS" id="PR00315">
    <property type="entry name" value="ELONGATNFCT"/>
</dbReference>
<dbReference type="SUPFAM" id="SSF50465">
    <property type="entry name" value="EF-Tu/eEF-1alpha/eIF2-gamma C-terminal domain"/>
    <property type="match status" value="1"/>
</dbReference>
<dbReference type="SUPFAM" id="SSF52540">
    <property type="entry name" value="P-loop containing nucleoside triphosphate hydrolases"/>
    <property type="match status" value="1"/>
</dbReference>
<dbReference type="SUPFAM" id="SSF50447">
    <property type="entry name" value="Translation proteins"/>
    <property type="match status" value="1"/>
</dbReference>
<dbReference type="PROSITE" id="PS00301">
    <property type="entry name" value="G_TR_1"/>
    <property type="match status" value="1"/>
</dbReference>
<dbReference type="PROSITE" id="PS51722">
    <property type="entry name" value="G_TR_2"/>
    <property type="match status" value="1"/>
</dbReference>
<keyword id="KW-0963">Cytoplasm</keyword>
<keyword id="KW-0251">Elongation factor</keyword>
<keyword id="KW-0342">GTP-binding</keyword>
<keyword id="KW-0378">Hydrolase</keyword>
<keyword id="KW-0460">Magnesium</keyword>
<keyword id="KW-0479">Metal-binding</keyword>
<keyword id="KW-0547">Nucleotide-binding</keyword>
<keyword id="KW-0648">Protein biosynthesis</keyword>
<comment type="function">
    <text evidence="2">GTP hydrolase that promotes the GTP-dependent binding of aminoacyl-tRNA to the A-site of ribosomes during protein biosynthesis.</text>
</comment>
<comment type="catalytic activity">
    <reaction evidence="2">
        <text>GTP + H2O = GDP + phosphate + H(+)</text>
        <dbReference type="Rhea" id="RHEA:19669"/>
        <dbReference type="ChEBI" id="CHEBI:15377"/>
        <dbReference type="ChEBI" id="CHEBI:15378"/>
        <dbReference type="ChEBI" id="CHEBI:37565"/>
        <dbReference type="ChEBI" id="CHEBI:43474"/>
        <dbReference type="ChEBI" id="CHEBI:58189"/>
        <dbReference type="EC" id="3.6.5.3"/>
    </reaction>
    <physiologicalReaction direction="left-to-right" evidence="2">
        <dbReference type="Rhea" id="RHEA:19670"/>
    </physiologicalReaction>
</comment>
<comment type="subunit">
    <text evidence="2">Monomer.</text>
</comment>
<comment type="subcellular location">
    <subcellularLocation>
        <location evidence="2">Cytoplasm</location>
    </subcellularLocation>
</comment>
<comment type="similarity">
    <text evidence="2">Belongs to the TRAFAC class translation factor GTPase superfamily. Classic translation factor GTPase family. EF-Tu/EF-1A subfamily.</text>
</comment>
<reference key="1">
    <citation type="submission" date="2007-08" db="EMBL/GenBank/DDBJ databases">
        <authorList>
            <consortium name="The Vibrio harveyi Genome Sequencing Project"/>
            <person name="Bassler B."/>
            <person name="Clifton S.W."/>
            <person name="Fulton L."/>
            <person name="Delehaunty K."/>
            <person name="Fronick C."/>
            <person name="Harrison M."/>
            <person name="Markivic C."/>
            <person name="Fulton R."/>
            <person name="Tin-Wollam A.-M."/>
            <person name="Shah N."/>
            <person name="Pepin K."/>
            <person name="Nash W."/>
            <person name="Thiruvilangam P."/>
            <person name="Bhonagiri V."/>
            <person name="Waters C."/>
            <person name="Tu K.C."/>
            <person name="Irgon J."/>
            <person name="Wilson R.K."/>
        </authorList>
    </citation>
    <scope>NUCLEOTIDE SEQUENCE [LARGE SCALE GENOMIC DNA]</scope>
    <source>
        <strain>ATCC BAA-1116 / BB120</strain>
    </source>
</reference>
<feature type="chain" id="PRO_0000337568" description="Elongation factor Tu">
    <location>
        <begin position="1"/>
        <end position="394"/>
    </location>
</feature>
<feature type="domain" description="tr-type G">
    <location>
        <begin position="10"/>
        <end position="204"/>
    </location>
</feature>
<feature type="region of interest" description="G1" evidence="1">
    <location>
        <begin position="19"/>
        <end position="26"/>
    </location>
</feature>
<feature type="region of interest" description="G2" evidence="1">
    <location>
        <begin position="60"/>
        <end position="64"/>
    </location>
</feature>
<feature type="region of interest" description="G3" evidence="1">
    <location>
        <begin position="81"/>
        <end position="84"/>
    </location>
</feature>
<feature type="region of interest" description="G4" evidence="1">
    <location>
        <begin position="136"/>
        <end position="139"/>
    </location>
</feature>
<feature type="region of interest" description="G5" evidence="1">
    <location>
        <begin position="174"/>
        <end position="176"/>
    </location>
</feature>
<feature type="binding site" evidence="2">
    <location>
        <begin position="19"/>
        <end position="26"/>
    </location>
    <ligand>
        <name>GTP</name>
        <dbReference type="ChEBI" id="CHEBI:37565"/>
    </ligand>
</feature>
<feature type="binding site" evidence="2">
    <location>
        <position position="26"/>
    </location>
    <ligand>
        <name>Mg(2+)</name>
        <dbReference type="ChEBI" id="CHEBI:18420"/>
    </ligand>
</feature>
<feature type="binding site" evidence="2">
    <location>
        <begin position="81"/>
        <end position="85"/>
    </location>
    <ligand>
        <name>GTP</name>
        <dbReference type="ChEBI" id="CHEBI:37565"/>
    </ligand>
</feature>
<feature type="binding site" evidence="2">
    <location>
        <begin position="136"/>
        <end position="139"/>
    </location>
    <ligand>
        <name>GTP</name>
        <dbReference type="ChEBI" id="CHEBI:37565"/>
    </ligand>
</feature>
<protein>
    <recommendedName>
        <fullName evidence="2">Elongation factor Tu</fullName>
        <shortName evidence="2">EF-Tu</shortName>
        <ecNumber evidence="2">3.6.5.3</ecNumber>
    </recommendedName>
</protein>